<feature type="chain" id="PRO_0000346342" description="Methylenetetrahydrofolate--tRNA-(uracil-5-)-methyltransferase TrmFO">
    <location>
        <begin position="1"/>
        <end position="449"/>
    </location>
</feature>
<feature type="binding site" evidence="1">
    <location>
        <begin position="9"/>
        <end position="14"/>
    </location>
    <ligand>
        <name>FAD</name>
        <dbReference type="ChEBI" id="CHEBI:57692"/>
    </ligand>
</feature>
<protein>
    <recommendedName>
        <fullName evidence="1">Methylenetetrahydrofolate--tRNA-(uracil-5-)-methyltransferase TrmFO</fullName>
        <ecNumber evidence="1">2.1.1.74</ecNumber>
    </recommendedName>
    <alternativeName>
        <fullName evidence="1">Folate-dependent tRNA (uracil-5-)-methyltransferase</fullName>
    </alternativeName>
    <alternativeName>
        <fullName evidence="1">Folate-dependent tRNA(M-5-U54)-methyltransferase</fullName>
    </alternativeName>
</protein>
<evidence type="ECO:0000255" key="1">
    <source>
        <dbReference type="HAMAP-Rule" id="MF_01037"/>
    </source>
</evidence>
<evidence type="ECO:0000305" key="2"/>
<dbReference type="EC" id="2.1.1.74" evidence="1"/>
<dbReference type="EMBL" id="BA000045">
    <property type="protein sequence ID" value="BAC91544.1"/>
    <property type="status" value="ALT_INIT"/>
    <property type="molecule type" value="Genomic_DNA"/>
</dbReference>
<dbReference type="RefSeq" id="NP_926549.1">
    <property type="nucleotide sequence ID" value="NC_005125.1"/>
</dbReference>
<dbReference type="RefSeq" id="WP_164929333.1">
    <property type="nucleotide sequence ID" value="NC_005125.1"/>
</dbReference>
<dbReference type="SMR" id="Q7NFC3"/>
<dbReference type="STRING" id="251221.gene:10761118"/>
<dbReference type="EnsemblBacteria" id="BAC91544">
    <property type="protein sequence ID" value="BAC91544"/>
    <property type="gene ID" value="BAC91544"/>
</dbReference>
<dbReference type="KEGG" id="gvi:glr3603"/>
<dbReference type="PATRIC" id="fig|251221.4.peg.3636"/>
<dbReference type="eggNOG" id="COG1206">
    <property type="taxonomic scope" value="Bacteria"/>
</dbReference>
<dbReference type="HOGENOM" id="CLU_033057_1_0_3"/>
<dbReference type="InParanoid" id="Q7NFC3"/>
<dbReference type="OrthoDB" id="9803114at2"/>
<dbReference type="PhylomeDB" id="Q7NFC3"/>
<dbReference type="Proteomes" id="UP000000557">
    <property type="component" value="Chromosome"/>
</dbReference>
<dbReference type="GO" id="GO:0005829">
    <property type="term" value="C:cytosol"/>
    <property type="evidence" value="ECO:0000318"/>
    <property type="project" value="GO_Central"/>
</dbReference>
<dbReference type="GO" id="GO:0050660">
    <property type="term" value="F:flavin adenine dinucleotide binding"/>
    <property type="evidence" value="ECO:0000318"/>
    <property type="project" value="GO_Central"/>
</dbReference>
<dbReference type="GO" id="GO:0047151">
    <property type="term" value="F:tRNA (uracil(54)-C5)-methyltransferase activity, 5,10-methylenetetrahydrofolate-dependent"/>
    <property type="evidence" value="ECO:0007669"/>
    <property type="project" value="UniProtKB-UniRule"/>
</dbReference>
<dbReference type="GO" id="GO:0030488">
    <property type="term" value="P:tRNA methylation"/>
    <property type="evidence" value="ECO:0000318"/>
    <property type="project" value="GO_Central"/>
</dbReference>
<dbReference type="GO" id="GO:0002098">
    <property type="term" value="P:tRNA wobble uridine modification"/>
    <property type="evidence" value="ECO:0000318"/>
    <property type="project" value="GO_Central"/>
</dbReference>
<dbReference type="Gene3D" id="3.50.50.60">
    <property type="entry name" value="FAD/NAD(P)-binding domain"/>
    <property type="match status" value="2"/>
</dbReference>
<dbReference type="HAMAP" id="MF_01037">
    <property type="entry name" value="TrmFO"/>
    <property type="match status" value="1"/>
</dbReference>
<dbReference type="InterPro" id="IPR036188">
    <property type="entry name" value="FAD/NAD-bd_sf"/>
</dbReference>
<dbReference type="InterPro" id="IPR002218">
    <property type="entry name" value="MnmG-rel"/>
</dbReference>
<dbReference type="InterPro" id="IPR040131">
    <property type="entry name" value="MnmG_N"/>
</dbReference>
<dbReference type="InterPro" id="IPR004417">
    <property type="entry name" value="TrmFO"/>
</dbReference>
<dbReference type="NCBIfam" id="TIGR00137">
    <property type="entry name" value="gid_trmFO"/>
    <property type="match status" value="1"/>
</dbReference>
<dbReference type="NCBIfam" id="NF003739">
    <property type="entry name" value="PRK05335.1"/>
    <property type="match status" value="1"/>
</dbReference>
<dbReference type="PANTHER" id="PTHR11806">
    <property type="entry name" value="GLUCOSE INHIBITED DIVISION PROTEIN A"/>
    <property type="match status" value="1"/>
</dbReference>
<dbReference type="PANTHER" id="PTHR11806:SF2">
    <property type="entry name" value="METHYLENETETRAHYDROFOLATE--TRNA-(URACIL-5-)-METHYLTRANSFERASE TRMFO"/>
    <property type="match status" value="1"/>
</dbReference>
<dbReference type="Pfam" id="PF01134">
    <property type="entry name" value="GIDA"/>
    <property type="match status" value="1"/>
</dbReference>
<dbReference type="SUPFAM" id="SSF51905">
    <property type="entry name" value="FAD/NAD(P)-binding domain"/>
    <property type="match status" value="1"/>
</dbReference>
<accession>Q7NFC3</accession>
<comment type="function">
    <text evidence="1">Catalyzes the folate-dependent formation of 5-methyl-uridine at position 54 (M-5-U54) in all tRNAs.</text>
</comment>
<comment type="catalytic activity">
    <reaction evidence="1">
        <text>uridine(54) in tRNA + (6R)-5,10-methylene-5,6,7,8-tetrahydrofolate + NADH + H(+) = 5-methyluridine(54) in tRNA + (6S)-5,6,7,8-tetrahydrofolate + NAD(+)</text>
        <dbReference type="Rhea" id="RHEA:16873"/>
        <dbReference type="Rhea" id="RHEA-COMP:10167"/>
        <dbReference type="Rhea" id="RHEA-COMP:10193"/>
        <dbReference type="ChEBI" id="CHEBI:15378"/>
        <dbReference type="ChEBI" id="CHEBI:15636"/>
        <dbReference type="ChEBI" id="CHEBI:57453"/>
        <dbReference type="ChEBI" id="CHEBI:57540"/>
        <dbReference type="ChEBI" id="CHEBI:57945"/>
        <dbReference type="ChEBI" id="CHEBI:65315"/>
        <dbReference type="ChEBI" id="CHEBI:74447"/>
        <dbReference type="EC" id="2.1.1.74"/>
    </reaction>
</comment>
<comment type="catalytic activity">
    <reaction evidence="1">
        <text>uridine(54) in tRNA + (6R)-5,10-methylene-5,6,7,8-tetrahydrofolate + NADPH + H(+) = 5-methyluridine(54) in tRNA + (6S)-5,6,7,8-tetrahydrofolate + NADP(+)</text>
        <dbReference type="Rhea" id="RHEA:62372"/>
        <dbReference type="Rhea" id="RHEA-COMP:10167"/>
        <dbReference type="Rhea" id="RHEA-COMP:10193"/>
        <dbReference type="ChEBI" id="CHEBI:15378"/>
        <dbReference type="ChEBI" id="CHEBI:15636"/>
        <dbReference type="ChEBI" id="CHEBI:57453"/>
        <dbReference type="ChEBI" id="CHEBI:57783"/>
        <dbReference type="ChEBI" id="CHEBI:58349"/>
        <dbReference type="ChEBI" id="CHEBI:65315"/>
        <dbReference type="ChEBI" id="CHEBI:74447"/>
        <dbReference type="EC" id="2.1.1.74"/>
    </reaction>
</comment>
<comment type="cofactor">
    <cofactor evidence="1">
        <name>FAD</name>
        <dbReference type="ChEBI" id="CHEBI:57692"/>
    </cofactor>
</comment>
<comment type="subcellular location">
    <subcellularLocation>
        <location evidence="1">Cytoplasm</location>
    </subcellularLocation>
</comment>
<comment type="similarity">
    <text evidence="1">Belongs to the MnmG family. TrmFO subfamily.</text>
</comment>
<comment type="sequence caution" evidence="2">
    <conflict type="erroneous initiation">
        <sequence resource="EMBL-CDS" id="BAC91544"/>
    </conflict>
</comment>
<gene>
    <name evidence="1" type="primary">trmFO</name>
    <name type="ordered locus">glr3603</name>
</gene>
<organism>
    <name type="scientific">Gloeobacter violaceus (strain ATCC 29082 / PCC 7421)</name>
    <dbReference type="NCBI Taxonomy" id="251221"/>
    <lineage>
        <taxon>Bacteria</taxon>
        <taxon>Bacillati</taxon>
        <taxon>Cyanobacteriota</taxon>
        <taxon>Cyanophyceae</taxon>
        <taxon>Gloeobacterales</taxon>
        <taxon>Gloeobacteraceae</taxon>
        <taxon>Gloeobacter</taxon>
    </lineage>
</organism>
<name>TRMFO_GLOVI</name>
<sequence length="449" mass="49166">MIEPVRVIGGGIAGAEAAWQCARAGVPVVLSEMRPVRPSPAHHTDHLGELVCSNSFGAMATDRAPGLLKEELRRLGSLVIAVADAHAVPAGGALAVDRAVYTRELTERVANHPLIELRREEVTEIPAAGLVVFATGPLTSEPLAHGLQALTGLGYLSFFDAASPIVAGESLDTEKVFLASRYDRGEAAYYNCPMSEPEYRAFWEALASAEQAELKEFEHEERKFFEACLPVEELARRGYETLRYGPLKPVGLTDPRTGRWPFACVQLRQEDRAGRLWNLVGFQTNLKWGEQKRVFQMIPGLEQAEFVRLGVMHRNTFLCSPHLLAPTLQFHAHPRLLACGQLTGTEGYTAAVAGGWLAGTNAARLAQSRDPLVLPVETMAGALVDYVSHGDPKTFQPMPPNFALLPEITPRIRHKQQRYWAYRDRALAAIDTFGRTHGLGAAPALARAN</sequence>
<proteinExistence type="inferred from homology"/>
<reference key="1">
    <citation type="journal article" date="2003" name="DNA Res.">
        <title>Complete genome structure of Gloeobacter violaceus PCC 7421, a cyanobacterium that lacks thylakoids.</title>
        <authorList>
            <person name="Nakamura Y."/>
            <person name="Kaneko T."/>
            <person name="Sato S."/>
            <person name="Mimuro M."/>
            <person name="Miyashita H."/>
            <person name="Tsuchiya T."/>
            <person name="Sasamoto S."/>
            <person name="Watanabe A."/>
            <person name="Kawashima K."/>
            <person name="Kishida Y."/>
            <person name="Kiyokawa C."/>
            <person name="Kohara M."/>
            <person name="Matsumoto M."/>
            <person name="Matsuno A."/>
            <person name="Nakazaki N."/>
            <person name="Shimpo S."/>
            <person name="Takeuchi C."/>
            <person name="Yamada M."/>
            <person name="Tabata S."/>
        </authorList>
    </citation>
    <scope>NUCLEOTIDE SEQUENCE [LARGE SCALE GENOMIC DNA]</scope>
    <source>
        <strain>ATCC 29082 / PCC 7421</strain>
    </source>
</reference>
<keyword id="KW-0963">Cytoplasm</keyword>
<keyword id="KW-0274">FAD</keyword>
<keyword id="KW-0285">Flavoprotein</keyword>
<keyword id="KW-0489">Methyltransferase</keyword>
<keyword id="KW-0520">NAD</keyword>
<keyword id="KW-0521">NADP</keyword>
<keyword id="KW-1185">Reference proteome</keyword>
<keyword id="KW-0808">Transferase</keyword>
<keyword id="KW-0819">tRNA processing</keyword>